<keyword id="KW-0238">DNA-binding</keyword>
<keyword id="KW-1185">Reference proteome</keyword>
<keyword id="KW-0804">Transcription</keyword>
<keyword id="KW-0805">Transcription regulation</keyword>
<proteinExistence type="inferred from homology"/>
<accession>P0A8S4</accession>
<accession>P24194</accession>
<feature type="chain" id="PRO_0000105648" description="HTH-type transcriptional regulator ArgP">
    <location>
        <begin position="1"/>
        <end position="297"/>
    </location>
</feature>
<feature type="domain" description="HTH lysR-type" evidence="1">
    <location>
        <begin position="4"/>
        <end position="60"/>
    </location>
</feature>
<feature type="DNA-binding region" description="H-T-H motif" evidence="1">
    <location>
        <begin position="21"/>
        <end position="40"/>
    </location>
</feature>
<organism>
    <name type="scientific">Shigella flexneri</name>
    <dbReference type="NCBI Taxonomy" id="623"/>
    <lineage>
        <taxon>Bacteria</taxon>
        <taxon>Pseudomonadati</taxon>
        <taxon>Pseudomonadota</taxon>
        <taxon>Gammaproteobacteria</taxon>
        <taxon>Enterobacterales</taxon>
        <taxon>Enterobacteriaceae</taxon>
        <taxon>Shigella</taxon>
    </lineage>
</organism>
<dbReference type="EMBL" id="AE005674">
    <property type="protein sequence ID" value="AAN44384.2"/>
    <property type="molecule type" value="Genomic_DNA"/>
</dbReference>
<dbReference type="EMBL" id="AE014073">
    <property type="protein sequence ID" value="AAP18206.1"/>
    <property type="molecule type" value="Genomic_DNA"/>
</dbReference>
<dbReference type="RefSeq" id="NP_708677.2">
    <property type="nucleotide sequence ID" value="NC_004337.2"/>
</dbReference>
<dbReference type="RefSeq" id="WP_000828351.1">
    <property type="nucleotide sequence ID" value="NZ_WPGW01000018.1"/>
</dbReference>
<dbReference type="SMR" id="P0A8S4"/>
<dbReference type="STRING" id="198214.SF2901"/>
<dbReference type="PaxDb" id="198214-SF2901"/>
<dbReference type="GeneID" id="1025934"/>
<dbReference type="GeneID" id="93779084"/>
<dbReference type="KEGG" id="sfl:SF2901"/>
<dbReference type="KEGG" id="sfx:S3101"/>
<dbReference type="PATRIC" id="fig|198214.7.peg.3451"/>
<dbReference type="HOGENOM" id="CLU_063829_0_0_6"/>
<dbReference type="Proteomes" id="UP000001006">
    <property type="component" value="Chromosome"/>
</dbReference>
<dbReference type="Proteomes" id="UP000002673">
    <property type="component" value="Chromosome"/>
</dbReference>
<dbReference type="GO" id="GO:0003677">
    <property type="term" value="F:DNA binding"/>
    <property type="evidence" value="ECO:0007669"/>
    <property type="project" value="UniProtKB-UniRule"/>
</dbReference>
<dbReference type="GO" id="GO:0003700">
    <property type="term" value="F:DNA-binding transcription factor activity"/>
    <property type="evidence" value="ECO:0007669"/>
    <property type="project" value="UniProtKB-UniRule"/>
</dbReference>
<dbReference type="CDD" id="cd08428">
    <property type="entry name" value="PBP2_IciA_ArgP"/>
    <property type="match status" value="1"/>
</dbReference>
<dbReference type="FunFam" id="1.10.10.10:FF:000061">
    <property type="entry name" value="HTH-type transcriptional regulator ArgP"/>
    <property type="match status" value="1"/>
</dbReference>
<dbReference type="FunFam" id="3.40.190.290:FF:000002">
    <property type="entry name" value="HTH-type transcriptional regulator ArgP"/>
    <property type="match status" value="1"/>
</dbReference>
<dbReference type="Gene3D" id="3.40.190.290">
    <property type="match status" value="1"/>
</dbReference>
<dbReference type="Gene3D" id="1.10.10.10">
    <property type="entry name" value="Winged helix-like DNA-binding domain superfamily/Winged helix DNA-binding domain"/>
    <property type="match status" value="1"/>
</dbReference>
<dbReference type="HAMAP" id="MF_00513">
    <property type="entry name" value="HTH_type_ArgP"/>
    <property type="match status" value="1"/>
</dbReference>
<dbReference type="InterPro" id="IPR017685">
    <property type="entry name" value="ArgP"/>
</dbReference>
<dbReference type="InterPro" id="IPR023490">
    <property type="entry name" value="ArgP_gammaproteobact"/>
</dbReference>
<dbReference type="InterPro" id="IPR050176">
    <property type="entry name" value="LTTR"/>
</dbReference>
<dbReference type="InterPro" id="IPR005119">
    <property type="entry name" value="LysR_subst-bd"/>
</dbReference>
<dbReference type="InterPro" id="IPR000847">
    <property type="entry name" value="Tscrpt_reg_HTH_LysR"/>
</dbReference>
<dbReference type="InterPro" id="IPR036388">
    <property type="entry name" value="WH-like_DNA-bd_sf"/>
</dbReference>
<dbReference type="InterPro" id="IPR036390">
    <property type="entry name" value="WH_DNA-bd_sf"/>
</dbReference>
<dbReference type="NCBIfam" id="TIGR03298">
    <property type="entry name" value="argP"/>
    <property type="match status" value="1"/>
</dbReference>
<dbReference type="NCBIfam" id="NF002964">
    <property type="entry name" value="PRK03635.1"/>
    <property type="match status" value="1"/>
</dbReference>
<dbReference type="NCBIfam" id="NF009888">
    <property type="entry name" value="PRK13348.1"/>
    <property type="match status" value="1"/>
</dbReference>
<dbReference type="PANTHER" id="PTHR30579:SF2">
    <property type="entry name" value="HTH-TYPE TRANSCRIPTIONAL REGULATOR ARGP"/>
    <property type="match status" value="1"/>
</dbReference>
<dbReference type="PANTHER" id="PTHR30579">
    <property type="entry name" value="TRANSCRIPTIONAL REGULATOR"/>
    <property type="match status" value="1"/>
</dbReference>
<dbReference type="Pfam" id="PF00126">
    <property type="entry name" value="HTH_1"/>
    <property type="match status" value="1"/>
</dbReference>
<dbReference type="Pfam" id="PF03466">
    <property type="entry name" value="LysR_substrate"/>
    <property type="match status" value="1"/>
</dbReference>
<dbReference type="PRINTS" id="PR00039">
    <property type="entry name" value="HTHLYSR"/>
</dbReference>
<dbReference type="SUPFAM" id="SSF53850">
    <property type="entry name" value="Periplasmic binding protein-like II"/>
    <property type="match status" value="1"/>
</dbReference>
<dbReference type="SUPFAM" id="SSF46785">
    <property type="entry name" value="Winged helix' DNA-binding domain"/>
    <property type="match status" value="1"/>
</dbReference>
<dbReference type="PROSITE" id="PS50931">
    <property type="entry name" value="HTH_LYSR"/>
    <property type="match status" value="1"/>
</dbReference>
<evidence type="ECO:0000255" key="1">
    <source>
        <dbReference type="HAMAP-Rule" id="MF_00513"/>
    </source>
</evidence>
<evidence type="ECO:0000305" key="2"/>
<name>ARGP_SHIFL</name>
<gene>
    <name evidence="1" type="primary">argP</name>
    <name type="synonym">iciA</name>
    <name type="ordered locus">SF2901</name>
    <name type="ordered locus">S3101</name>
</gene>
<protein>
    <recommendedName>
        <fullName evidence="1">HTH-type transcriptional regulator ArgP</fullName>
    </recommendedName>
</protein>
<sequence>MKRPDYRTLQALDAVIRERGFERAAQKLCITQSAVSQRIKQLENMFGQPLLVRTVPPRPTEQGQKLLALLRQVELLEEEWLGDEQTGSTPLLLSLAVNADSLATWLLPALAPVLADSPIRLNLQVEDETRTQERLRRGEVVGAVSIQHQALPSCLVDKLGALDYLFVSSKPFAEKYFPNGVTRSALLKAPVVAFDHLDDMHQAFLQQNFDLPPGSVPCHIVNSSEAFVQLARQGTTCCMIPHLQIEKELASGELIDLTPGLFQRRMLYWHRFAPESRMMRKVTDALLDYGHKVLRQD</sequence>
<comment type="function">
    <text evidence="1">Controls the transcription of genes involved in arginine and lysine metabolism.</text>
</comment>
<comment type="subunit">
    <text evidence="1">Homodimer.</text>
</comment>
<comment type="similarity">
    <text evidence="2">Belongs to the LysR transcriptional regulatory family.</text>
</comment>
<reference key="1">
    <citation type="journal article" date="2002" name="Nucleic Acids Res.">
        <title>Genome sequence of Shigella flexneri 2a: insights into pathogenicity through comparison with genomes of Escherichia coli K12 and O157.</title>
        <authorList>
            <person name="Jin Q."/>
            <person name="Yuan Z."/>
            <person name="Xu J."/>
            <person name="Wang Y."/>
            <person name="Shen Y."/>
            <person name="Lu W."/>
            <person name="Wang J."/>
            <person name="Liu H."/>
            <person name="Yang J."/>
            <person name="Yang F."/>
            <person name="Zhang X."/>
            <person name="Zhang J."/>
            <person name="Yang G."/>
            <person name="Wu H."/>
            <person name="Qu D."/>
            <person name="Dong J."/>
            <person name="Sun L."/>
            <person name="Xue Y."/>
            <person name="Zhao A."/>
            <person name="Gao Y."/>
            <person name="Zhu J."/>
            <person name="Kan B."/>
            <person name="Ding K."/>
            <person name="Chen S."/>
            <person name="Cheng H."/>
            <person name="Yao Z."/>
            <person name="He B."/>
            <person name="Chen R."/>
            <person name="Ma D."/>
            <person name="Qiang B."/>
            <person name="Wen Y."/>
            <person name="Hou Y."/>
            <person name="Yu J."/>
        </authorList>
    </citation>
    <scope>NUCLEOTIDE SEQUENCE [LARGE SCALE GENOMIC DNA]</scope>
    <source>
        <strain>301 / Serotype 2a</strain>
    </source>
</reference>
<reference key="2">
    <citation type="journal article" date="2003" name="Infect. Immun.">
        <title>Complete genome sequence and comparative genomics of Shigella flexneri serotype 2a strain 2457T.</title>
        <authorList>
            <person name="Wei J."/>
            <person name="Goldberg M.B."/>
            <person name="Burland V."/>
            <person name="Venkatesan M.M."/>
            <person name="Deng W."/>
            <person name="Fournier G."/>
            <person name="Mayhew G.F."/>
            <person name="Plunkett G. III"/>
            <person name="Rose D.J."/>
            <person name="Darling A."/>
            <person name="Mau B."/>
            <person name="Perna N.T."/>
            <person name="Payne S.M."/>
            <person name="Runyen-Janecky L.J."/>
            <person name="Zhou S."/>
            <person name="Schwartz D.C."/>
            <person name="Blattner F.R."/>
        </authorList>
    </citation>
    <scope>NUCLEOTIDE SEQUENCE [LARGE SCALE GENOMIC DNA]</scope>
    <source>
        <strain>ATCC 700930 / 2457T / Serotype 2a</strain>
    </source>
</reference>